<name>MTNN_SHESH</name>
<sequence length="230" mass="24171">MKIGIIGAMEPEVAHLVESMENPSSTTIAGIEFVAGQLAGKDVVVTRSGIGKVTASIATTLLIEKYAPDAIINTGSAGGFADELAIGDIVISSEVRHHDVDVTAFGYEIGQMAQQPAAFIPDTALVTAAQKAVASLGEVKAIEGLICTGDSFICDPVRTKTMLEHFPTMAACEMEGAAIAQVCHQFDVPFVVIRSLSDNANNDSPVDFDEYLVKAGHHSALMVIALLEQL</sequence>
<keyword id="KW-0028">Amino-acid biosynthesis</keyword>
<keyword id="KW-0378">Hydrolase</keyword>
<keyword id="KW-0486">Methionine biosynthesis</keyword>
<keyword id="KW-1185">Reference proteome</keyword>
<reference key="1">
    <citation type="submission" date="2007-08" db="EMBL/GenBank/DDBJ databases">
        <title>Complete sequence of Shewanella sediminis HAW-EB3.</title>
        <authorList>
            <consortium name="US DOE Joint Genome Institute"/>
            <person name="Copeland A."/>
            <person name="Lucas S."/>
            <person name="Lapidus A."/>
            <person name="Barry K."/>
            <person name="Glavina del Rio T."/>
            <person name="Dalin E."/>
            <person name="Tice H."/>
            <person name="Pitluck S."/>
            <person name="Chertkov O."/>
            <person name="Brettin T."/>
            <person name="Bruce D."/>
            <person name="Detter J.C."/>
            <person name="Han C."/>
            <person name="Schmutz J."/>
            <person name="Larimer F."/>
            <person name="Land M."/>
            <person name="Hauser L."/>
            <person name="Kyrpides N."/>
            <person name="Kim E."/>
            <person name="Zhao J.-S."/>
            <person name="Richardson P."/>
        </authorList>
    </citation>
    <scope>NUCLEOTIDE SEQUENCE [LARGE SCALE GENOMIC DNA]</scope>
    <source>
        <strain>HAW-EB3</strain>
    </source>
</reference>
<proteinExistence type="inferred from homology"/>
<protein>
    <recommendedName>
        <fullName evidence="1">5'-methylthioadenosine/S-adenosylhomocysteine nucleosidase</fullName>
        <shortName evidence="1">MTA/SAH nucleosidase</shortName>
        <shortName evidence="1">MTAN</shortName>
        <ecNumber evidence="1">3.2.2.9</ecNumber>
    </recommendedName>
    <alternativeName>
        <fullName evidence="1">5'-deoxyadenosine nucleosidase</fullName>
        <shortName evidence="1">DOA nucleosidase</shortName>
        <shortName evidence="1">dAdo nucleosidase</shortName>
    </alternativeName>
    <alternativeName>
        <fullName evidence="1">5'-methylthioadenosine nucleosidase</fullName>
        <shortName evidence="1">MTA nucleosidase</shortName>
    </alternativeName>
    <alternativeName>
        <fullName evidence="1">S-adenosylhomocysteine nucleosidase</fullName>
        <shortName evidence="1">AdoHcy nucleosidase</shortName>
        <shortName evidence="1">SAH nucleosidase</shortName>
        <shortName evidence="1">SRH nucleosidase</shortName>
    </alternativeName>
</protein>
<dbReference type="EC" id="3.2.2.9" evidence="1"/>
<dbReference type="EMBL" id="CP000821">
    <property type="protein sequence ID" value="ABV35726.1"/>
    <property type="molecule type" value="Genomic_DNA"/>
</dbReference>
<dbReference type="RefSeq" id="WP_012141462.1">
    <property type="nucleotide sequence ID" value="NC_009831.1"/>
</dbReference>
<dbReference type="SMR" id="A8FSA3"/>
<dbReference type="STRING" id="425104.Ssed_1115"/>
<dbReference type="KEGG" id="sse:Ssed_1115"/>
<dbReference type="eggNOG" id="COG0775">
    <property type="taxonomic scope" value="Bacteria"/>
</dbReference>
<dbReference type="HOGENOM" id="CLU_031248_2_2_6"/>
<dbReference type="OrthoDB" id="9792278at2"/>
<dbReference type="UniPathway" id="UPA00904">
    <property type="reaction ID" value="UER00871"/>
</dbReference>
<dbReference type="Proteomes" id="UP000002015">
    <property type="component" value="Chromosome"/>
</dbReference>
<dbReference type="GO" id="GO:0005829">
    <property type="term" value="C:cytosol"/>
    <property type="evidence" value="ECO:0007669"/>
    <property type="project" value="TreeGrafter"/>
</dbReference>
<dbReference type="GO" id="GO:0008782">
    <property type="term" value="F:adenosylhomocysteine nucleosidase activity"/>
    <property type="evidence" value="ECO:0007669"/>
    <property type="project" value="UniProtKB-UniRule"/>
</dbReference>
<dbReference type="GO" id="GO:0008930">
    <property type="term" value="F:methylthioadenosine nucleosidase activity"/>
    <property type="evidence" value="ECO:0007669"/>
    <property type="project" value="UniProtKB-UniRule"/>
</dbReference>
<dbReference type="GO" id="GO:0019509">
    <property type="term" value="P:L-methionine salvage from methylthioadenosine"/>
    <property type="evidence" value="ECO:0007669"/>
    <property type="project" value="UniProtKB-UniRule"/>
</dbReference>
<dbReference type="GO" id="GO:0019284">
    <property type="term" value="P:L-methionine salvage from S-adenosylmethionine"/>
    <property type="evidence" value="ECO:0007669"/>
    <property type="project" value="TreeGrafter"/>
</dbReference>
<dbReference type="GO" id="GO:0009164">
    <property type="term" value="P:nucleoside catabolic process"/>
    <property type="evidence" value="ECO:0007669"/>
    <property type="project" value="InterPro"/>
</dbReference>
<dbReference type="CDD" id="cd09008">
    <property type="entry name" value="MTAN"/>
    <property type="match status" value="1"/>
</dbReference>
<dbReference type="FunFam" id="3.40.50.1580:FF:000001">
    <property type="entry name" value="MTA/SAH nucleosidase family protein"/>
    <property type="match status" value="1"/>
</dbReference>
<dbReference type="Gene3D" id="3.40.50.1580">
    <property type="entry name" value="Nucleoside phosphorylase domain"/>
    <property type="match status" value="1"/>
</dbReference>
<dbReference type="HAMAP" id="MF_01684">
    <property type="entry name" value="Salvage_MtnN"/>
    <property type="match status" value="1"/>
</dbReference>
<dbReference type="InterPro" id="IPR010049">
    <property type="entry name" value="MTA_SAH_Nsdase"/>
</dbReference>
<dbReference type="InterPro" id="IPR000845">
    <property type="entry name" value="Nucleoside_phosphorylase_d"/>
</dbReference>
<dbReference type="InterPro" id="IPR035994">
    <property type="entry name" value="Nucleoside_phosphorylase_sf"/>
</dbReference>
<dbReference type="NCBIfam" id="TIGR01704">
    <property type="entry name" value="MTA_SAH-Nsdase"/>
    <property type="match status" value="1"/>
</dbReference>
<dbReference type="NCBIfam" id="NF004079">
    <property type="entry name" value="PRK05584.1"/>
    <property type="match status" value="1"/>
</dbReference>
<dbReference type="PANTHER" id="PTHR46832">
    <property type="entry name" value="5'-METHYLTHIOADENOSINE/S-ADENOSYLHOMOCYSTEINE NUCLEOSIDASE"/>
    <property type="match status" value="1"/>
</dbReference>
<dbReference type="PANTHER" id="PTHR46832:SF1">
    <property type="entry name" value="5'-METHYLTHIOADENOSINE_S-ADENOSYLHOMOCYSTEINE NUCLEOSIDASE"/>
    <property type="match status" value="1"/>
</dbReference>
<dbReference type="Pfam" id="PF01048">
    <property type="entry name" value="PNP_UDP_1"/>
    <property type="match status" value="1"/>
</dbReference>
<dbReference type="SUPFAM" id="SSF53167">
    <property type="entry name" value="Purine and uridine phosphorylases"/>
    <property type="match status" value="1"/>
</dbReference>
<evidence type="ECO:0000255" key="1">
    <source>
        <dbReference type="HAMAP-Rule" id="MF_01684"/>
    </source>
</evidence>
<comment type="function">
    <text evidence="1">Catalyzes the irreversible cleavage of the glycosidic bond in both 5'-methylthioadenosine (MTA) and S-adenosylhomocysteine (SAH/AdoHcy) to adenine and the corresponding thioribose, 5'-methylthioribose and S-ribosylhomocysteine, respectively. Also cleaves 5'-deoxyadenosine, a toxic by-product of radical S-adenosylmethionine (SAM) enzymes, into 5-deoxyribose and adenine.</text>
</comment>
<comment type="catalytic activity">
    <reaction evidence="1">
        <text>S-adenosyl-L-homocysteine + H2O = S-(5-deoxy-D-ribos-5-yl)-L-homocysteine + adenine</text>
        <dbReference type="Rhea" id="RHEA:17805"/>
        <dbReference type="ChEBI" id="CHEBI:15377"/>
        <dbReference type="ChEBI" id="CHEBI:16708"/>
        <dbReference type="ChEBI" id="CHEBI:57856"/>
        <dbReference type="ChEBI" id="CHEBI:58195"/>
        <dbReference type="EC" id="3.2.2.9"/>
    </reaction>
</comment>
<comment type="catalytic activity">
    <reaction evidence="1">
        <text>S-methyl-5'-thioadenosine + H2O = 5-(methylsulfanyl)-D-ribose + adenine</text>
        <dbReference type="Rhea" id="RHEA:13617"/>
        <dbReference type="ChEBI" id="CHEBI:15377"/>
        <dbReference type="ChEBI" id="CHEBI:16708"/>
        <dbReference type="ChEBI" id="CHEBI:17509"/>
        <dbReference type="ChEBI" id="CHEBI:78440"/>
        <dbReference type="EC" id="3.2.2.9"/>
    </reaction>
</comment>
<comment type="catalytic activity">
    <reaction evidence="1">
        <text>5'-deoxyadenosine + H2O = 5-deoxy-D-ribose + adenine</text>
        <dbReference type="Rhea" id="RHEA:29859"/>
        <dbReference type="ChEBI" id="CHEBI:15377"/>
        <dbReference type="ChEBI" id="CHEBI:16708"/>
        <dbReference type="ChEBI" id="CHEBI:17319"/>
        <dbReference type="ChEBI" id="CHEBI:149540"/>
        <dbReference type="EC" id="3.2.2.9"/>
    </reaction>
    <physiologicalReaction direction="left-to-right" evidence="1">
        <dbReference type="Rhea" id="RHEA:29860"/>
    </physiologicalReaction>
</comment>
<comment type="pathway">
    <text evidence="1">Amino-acid biosynthesis; L-methionine biosynthesis via salvage pathway; S-methyl-5-thio-alpha-D-ribose 1-phosphate from S-methyl-5'-thioadenosine (hydrolase route): step 1/2.</text>
</comment>
<comment type="similarity">
    <text evidence="1">Belongs to the PNP/UDP phosphorylase family. MtnN subfamily.</text>
</comment>
<accession>A8FSA3</accession>
<organism>
    <name type="scientific">Shewanella sediminis (strain HAW-EB3)</name>
    <dbReference type="NCBI Taxonomy" id="425104"/>
    <lineage>
        <taxon>Bacteria</taxon>
        <taxon>Pseudomonadati</taxon>
        <taxon>Pseudomonadota</taxon>
        <taxon>Gammaproteobacteria</taxon>
        <taxon>Alteromonadales</taxon>
        <taxon>Shewanellaceae</taxon>
        <taxon>Shewanella</taxon>
    </lineage>
</organism>
<feature type="chain" id="PRO_0000359350" description="5'-methylthioadenosine/S-adenosylhomocysteine nucleosidase">
    <location>
        <begin position="1"/>
        <end position="230"/>
    </location>
</feature>
<feature type="active site" description="Proton acceptor" evidence="1">
    <location>
        <position position="12"/>
    </location>
</feature>
<feature type="active site" description="Proton donor" evidence="1">
    <location>
        <position position="198"/>
    </location>
</feature>
<feature type="binding site" evidence="1">
    <location>
        <position position="78"/>
    </location>
    <ligand>
        <name>substrate</name>
    </ligand>
</feature>
<feature type="binding site" evidence="1">
    <location>
        <position position="153"/>
    </location>
    <ligand>
        <name>substrate</name>
    </ligand>
</feature>
<feature type="binding site" evidence="1">
    <location>
        <begin position="174"/>
        <end position="175"/>
    </location>
    <ligand>
        <name>substrate</name>
    </ligand>
</feature>
<gene>
    <name evidence="1" type="primary">mtnN</name>
    <name type="ordered locus">Ssed_1115</name>
</gene>